<protein>
    <recommendedName>
        <fullName>Actin-binding LIM protein 2</fullName>
        <shortName>abLIM-2</shortName>
    </recommendedName>
    <alternativeName>
        <fullName>Actin-binding LIM protein family member 2</fullName>
    </alternativeName>
</protein>
<name>ABLM2_HUMAN</name>
<comment type="function">
    <text evidence="7">May act as scaffold protein. May stimulate ABRA activity and ABRA-dependent SRF transcriptional activity.</text>
</comment>
<comment type="subunit">
    <text evidence="7">Interacts with F-actin and ABRA.</text>
</comment>
<comment type="interaction">
    <interactant intactId="EBI-16436655">
        <id>Q6H8Q1-8</id>
    </interactant>
    <interactant intactId="EBI-16435510">
        <id>A0A0S2Z5Z3</id>
        <label>C6orf142</label>
    </interactant>
    <organismsDiffer>false</organismsDiffer>
    <experiments>3</experiments>
</comment>
<comment type="interaction">
    <interactant intactId="EBI-16436655">
        <id>Q6H8Q1-8</id>
    </interactant>
    <interactant intactId="EBI-16435493">
        <id>A0A0S2Z6I7</id>
        <label>C6orf142</label>
    </interactant>
    <organismsDiffer>false</organismsDiffer>
    <experiments>4</experiments>
</comment>
<comment type="interaction">
    <interactant intactId="EBI-16436655">
        <id>Q6H8Q1-8</id>
    </interactant>
    <interactant intactId="EBI-25837549">
        <id>P28329-3</id>
        <label>CHAT</label>
    </interactant>
    <organismsDiffer>false</organismsDiffer>
    <experiments>3</experiments>
</comment>
<comment type="interaction">
    <interactant intactId="EBI-16436655">
        <id>Q6H8Q1-8</id>
    </interactant>
    <interactant intactId="EBI-10976677">
        <id>G5E9A7</id>
        <label>DMWD</label>
    </interactant>
    <organismsDiffer>false</organismsDiffer>
    <experiments>3</experiments>
</comment>
<comment type="interaction">
    <interactant intactId="EBI-16436655">
        <id>Q6H8Q1-8</id>
    </interactant>
    <interactant intactId="EBI-348399">
        <id>P22607</id>
        <label>FGFR3</label>
    </interactant>
    <organismsDiffer>false</organismsDiffer>
    <experiments>3</experiments>
</comment>
<comment type="interaction">
    <interactant intactId="EBI-16436655">
        <id>Q6H8Q1-8</id>
    </interactant>
    <interactant intactId="EBI-744302">
        <id>P14136</id>
        <label>GFAP</label>
    </interactant>
    <organismsDiffer>false</organismsDiffer>
    <experiments>3</experiments>
</comment>
<comment type="interaction">
    <interactant intactId="EBI-16436655">
        <id>Q6H8Q1-8</id>
    </interactant>
    <interactant intactId="EBI-1055254">
        <id>Q8WXH2</id>
        <label>JPH3</label>
    </interactant>
    <organismsDiffer>false</organismsDiffer>
    <experiments>3</experiments>
</comment>
<comment type="interaction">
    <interactant intactId="EBI-16436655">
        <id>Q6H8Q1-8</id>
    </interactant>
    <interactant intactId="EBI-351935">
        <id>P02545</id>
        <label>LMNA</label>
    </interactant>
    <organismsDiffer>false</organismsDiffer>
    <experiments>3</experiments>
</comment>
<comment type="interaction">
    <interactant intactId="EBI-16436655">
        <id>Q6H8Q1-8</id>
    </interactant>
    <interactant intactId="EBI-1014472">
        <id>P35240</id>
        <label>NF2</label>
    </interactant>
    <organismsDiffer>false</organismsDiffer>
    <experiments>3</experiments>
</comment>
<comment type="interaction">
    <interactant intactId="EBI-16436655">
        <id>Q6H8Q1-8</id>
    </interactant>
    <interactant intactId="EBI-25929070">
        <id>Q9BZ23-2</id>
        <label>PANK2</label>
    </interactant>
    <organismsDiffer>false</organismsDiffer>
    <experiments>3</experiments>
</comment>
<comment type="interaction">
    <interactant intactId="EBI-16436655">
        <id>Q6H8Q1-8</id>
    </interactant>
    <interactant intactId="EBI-5235340">
        <id>Q7Z699</id>
        <label>SPRED1</label>
    </interactant>
    <organismsDiffer>false</organismsDiffer>
    <experiments>3</experiments>
</comment>
<comment type="subcellular location">
    <subcellularLocation>
        <location>Cytoplasm</location>
    </subcellularLocation>
    <text evidence="1">In skeletal muscle, sarcomeric or cosarcomeric localization.</text>
</comment>
<comment type="alternative products">
    <event type="alternative splicing"/>
    <isoform>
        <id>Q6H8Q1-1</id>
        <name>1</name>
        <sequence type="displayed"/>
    </isoform>
    <isoform>
        <id>Q6H8Q1-2</id>
        <name>2</name>
        <sequence type="described" ref="VSP_012117"/>
    </isoform>
    <isoform>
        <id>Q6H8Q1-3</id>
        <name>3</name>
        <sequence type="described" ref="VSP_012113 VSP_012115 VSP_012117"/>
    </isoform>
    <isoform>
        <id>Q6H8Q1-4</id>
        <name>4</name>
        <sequence type="described" ref="VSP_012112 VSP_012113 VSP_012114 VSP_012116"/>
    </isoform>
    <isoform>
        <id>Q6H8Q1-5</id>
        <name>5</name>
        <sequence type="described" ref="VSP_012116 VSP_012117"/>
    </isoform>
    <isoform>
        <id>Q6H8Q1-6</id>
        <name>6</name>
        <sequence type="described" ref="VSP_012113 VSP_012115 VSP_012116 VSP_012118 VSP_012119"/>
    </isoform>
    <isoform>
        <id>Q6H8Q1-7</id>
        <name>7</name>
        <sequence type="described" ref="VSP_012115"/>
    </isoform>
    <isoform>
        <id>Q6H8Q1-8</id>
        <name>8</name>
        <sequence type="described" ref="VSP_012115 VSP_012116 VSP_012117"/>
    </isoform>
    <isoform>
        <id>Q6H8Q1-9</id>
        <name>9</name>
        <sequence type="described" ref="VSP_046646 VSP_012116"/>
    </isoform>
</comment>
<comment type="tissue specificity">
    <text evidence="7">Highly expressed in skeletal muscle.</text>
</comment>
<comment type="sequence caution" evidence="15">
    <conflict type="erroneous initiation">
        <sequence resource="EMBL-CDS" id="AAH67214"/>
    </conflict>
</comment>
<dbReference type="EMBL" id="DQ413177">
    <property type="protein sequence ID" value="ABD83330.1"/>
    <property type="molecule type" value="mRNA"/>
</dbReference>
<dbReference type="EMBL" id="AJ748600">
    <property type="protein sequence ID" value="CAG38375.1"/>
    <property type="molecule type" value="mRNA"/>
</dbReference>
<dbReference type="EMBL" id="AJ748601">
    <property type="protein sequence ID" value="CAG38376.1"/>
    <property type="molecule type" value="mRNA"/>
</dbReference>
<dbReference type="EMBL" id="AK094754">
    <property type="protein sequence ID" value="BAC04414.1"/>
    <property type="molecule type" value="mRNA"/>
</dbReference>
<dbReference type="EMBL" id="AK094798">
    <property type="protein sequence ID" value="BAC04427.1"/>
    <property type="molecule type" value="mRNA"/>
</dbReference>
<dbReference type="EMBL" id="AC097381">
    <property type="status" value="NOT_ANNOTATED_CDS"/>
    <property type="molecule type" value="Genomic_DNA"/>
</dbReference>
<dbReference type="EMBL" id="AC104650">
    <property type="status" value="NOT_ANNOTATED_CDS"/>
    <property type="molecule type" value="Genomic_DNA"/>
</dbReference>
<dbReference type="EMBL" id="AC114807">
    <property type="status" value="NOT_ANNOTATED_CDS"/>
    <property type="molecule type" value="Genomic_DNA"/>
</dbReference>
<dbReference type="EMBL" id="BC067214">
    <property type="protein sequence ID" value="AAH67214.1"/>
    <property type="status" value="ALT_INIT"/>
    <property type="molecule type" value="mRNA"/>
</dbReference>
<dbReference type="EMBL" id="BC122567">
    <property type="protein sequence ID" value="AAI22568.1"/>
    <property type="molecule type" value="mRNA"/>
</dbReference>
<dbReference type="EMBL" id="AB058711">
    <property type="protein sequence ID" value="BAB47437.1"/>
    <property type="molecule type" value="mRNA"/>
</dbReference>
<dbReference type="EMBL" id="AL834195">
    <property type="protein sequence ID" value="CAD38885.2"/>
    <property type="molecule type" value="mRNA"/>
</dbReference>
<dbReference type="CCDS" id="CCDS47011.1">
    <molecule id="Q6H8Q1-7"/>
</dbReference>
<dbReference type="CCDS" id="CCDS47012.1">
    <molecule id="Q6H8Q1-2"/>
</dbReference>
<dbReference type="CCDS" id="CCDS47013.1">
    <molecule id="Q6H8Q1-1"/>
</dbReference>
<dbReference type="CCDS" id="CCDS47014.1">
    <molecule id="Q6H8Q1-9"/>
</dbReference>
<dbReference type="CCDS" id="CCDS47015.1">
    <molecule id="Q6H8Q1-3"/>
</dbReference>
<dbReference type="CCDS" id="CCDS47016.1">
    <molecule id="Q6H8Q1-6"/>
</dbReference>
<dbReference type="CCDS" id="CCDS54719.1">
    <molecule id="Q6H8Q1-8"/>
</dbReference>
<dbReference type="CCDS" id="CCDS68669.1">
    <molecule id="Q6H8Q1-4"/>
</dbReference>
<dbReference type="RefSeq" id="NP_001123555.1">
    <molecule id="Q6H8Q1-9"/>
    <property type="nucleotide sequence ID" value="NM_001130083.2"/>
</dbReference>
<dbReference type="RefSeq" id="NP_001123556.1">
    <molecule id="Q6H8Q1-1"/>
    <property type="nucleotide sequence ID" value="NM_001130084.2"/>
</dbReference>
<dbReference type="RefSeq" id="NP_001123557.1">
    <molecule id="Q6H8Q1-2"/>
    <property type="nucleotide sequence ID" value="NM_001130085.2"/>
</dbReference>
<dbReference type="RefSeq" id="NP_001123558.1">
    <molecule id="Q6H8Q1-7"/>
    <property type="nucleotide sequence ID" value="NM_001130086.2"/>
</dbReference>
<dbReference type="RefSeq" id="NP_001123559.1">
    <molecule id="Q6H8Q1-3"/>
    <property type="nucleotide sequence ID" value="NM_001130087.2"/>
</dbReference>
<dbReference type="RefSeq" id="NP_001123560.1">
    <molecule id="Q6H8Q1-6"/>
    <property type="nucleotide sequence ID" value="NM_001130088.2"/>
</dbReference>
<dbReference type="RefSeq" id="NP_001273617.1">
    <molecule id="Q6H8Q1-4"/>
    <property type="nucleotide sequence ID" value="NM_001286688.2"/>
</dbReference>
<dbReference type="RefSeq" id="NP_115808.3">
    <molecule id="Q6H8Q1-8"/>
    <property type="nucleotide sequence ID" value="NM_032432.4"/>
</dbReference>
<dbReference type="PDB" id="1V6G">
    <property type="method" value="NMR"/>
    <property type="chains" value="A=73-140"/>
</dbReference>
<dbReference type="PDB" id="1WIG">
    <property type="method" value="NMR"/>
    <property type="chains" value="A=212-271"/>
</dbReference>
<dbReference type="PDB" id="2L3X">
    <property type="method" value="NMR"/>
    <property type="chains" value="A=546-611"/>
</dbReference>
<dbReference type="PDBsum" id="1V6G"/>
<dbReference type="PDBsum" id="1WIG"/>
<dbReference type="PDBsum" id="2L3X"/>
<dbReference type="BMRB" id="Q6H8Q1"/>
<dbReference type="SMR" id="Q6H8Q1"/>
<dbReference type="BioGRID" id="124086">
    <property type="interactions" value="14"/>
</dbReference>
<dbReference type="FunCoup" id="Q6H8Q1">
    <property type="interactions" value="158"/>
</dbReference>
<dbReference type="IntAct" id="Q6H8Q1">
    <property type="interactions" value="19"/>
</dbReference>
<dbReference type="STRING" id="9606.ENSP00000393511"/>
<dbReference type="GlyCosmos" id="Q6H8Q1">
    <property type="glycosylation" value="4 sites, 1 glycan"/>
</dbReference>
<dbReference type="GlyGen" id="Q6H8Q1">
    <property type="glycosylation" value="6 sites, 1 O-linked glycan (6 sites)"/>
</dbReference>
<dbReference type="iPTMnet" id="Q6H8Q1"/>
<dbReference type="PhosphoSitePlus" id="Q6H8Q1"/>
<dbReference type="SwissPalm" id="Q6H8Q1"/>
<dbReference type="BioMuta" id="ABLIM2"/>
<dbReference type="DMDM" id="56404514"/>
<dbReference type="jPOST" id="Q6H8Q1"/>
<dbReference type="MassIVE" id="Q6H8Q1"/>
<dbReference type="PaxDb" id="9606-ENSP00000393511"/>
<dbReference type="PeptideAtlas" id="Q6H8Q1"/>
<dbReference type="ProteomicsDB" id="20020"/>
<dbReference type="ProteomicsDB" id="66340">
    <molecule id="Q6H8Q1-1"/>
</dbReference>
<dbReference type="ProteomicsDB" id="66341">
    <molecule id="Q6H8Q1-2"/>
</dbReference>
<dbReference type="ProteomicsDB" id="66342">
    <molecule id="Q6H8Q1-3"/>
</dbReference>
<dbReference type="ProteomicsDB" id="66343">
    <molecule id="Q6H8Q1-4"/>
</dbReference>
<dbReference type="ProteomicsDB" id="66344">
    <molecule id="Q6H8Q1-5"/>
</dbReference>
<dbReference type="ProteomicsDB" id="66345">
    <molecule id="Q6H8Q1-6"/>
</dbReference>
<dbReference type="ProteomicsDB" id="66346">
    <molecule id="Q6H8Q1-7"/>
</dbReference>
<dbReference type="ProteomicsDB" id="66347">
    <molecule id="Q6H8Q1-8"/>
</dbReference>
<dbReference type="Antibodypedia" id="22725">
    <property type="antibodies" value="48 antibodies from 16 providers"/>
</dbReference>
<dbReference type="DNASU" id="84448"/>
<dbReference type="Ensembl" id="ENST00000341937.9">
    <molecule id="Q6H8Q1-1"/>
    <property type="protein sequence ID" value="ENSP00000342813.5"/>
    <property type="gene ID" value="ENSG00000163995.22"/>
</dbReference>
<dbReference type="Ensembl" id="ENST00000361581.9">
    <molecule id="Q6H8Q1-2"/>
    <property type="protein sequence ID" value="ENSP00000355003.5"/>
    <property type="gene ID" value="ENSG00000163995.22"/>
</dbReference>
<dbReference type="Ensembl" id="ENST00000361737.9">
    <molecule id="Q6H8Q1-3"/>
    <property type="protein sequence ID" value="ENSP00000354887.5"/>
    <property type="gene ID" value="ENSG00000163995.22"/>
</dbReference>
<dbReference type="Ensembl" id="ENST00000407564.7">
    <molecule id="Q6H8Q1-8"/>
    <property type="protein sequence ID" value="ENSP00000384658.3"/>
    <property type="gene ID" value="ENSG00000163995.22"/>
</dbReference>
<dbReference type="Ensembl" id="ENST00000428004.6">
    <molecule id="Q6H8Q1-6"/>
    <property type="protein sequence ID" value="ENSP00000389410.2"/>
    <property type="gene ID" value="ENSG00000163995.22"/>
</dbReference>
<dbReference type="Ensembl" id="ENST00000447017.7">
    <molecule id="Q6H8Q1-9"/>
    <property type="protein sequence ID" value="ENSP00000393511.2"/>
    <property type="gene ID" value="ENSG00000163995.22"/>
</dbReference>
<dbReference type="Ensembl" id="ENST00000505872.5">
    <molecule id="Q6H8Q1-7"/>
    <property type="protein sequence ID" value="ENSP00000421283.1"/>
    <property type="gene ID" value="ENSG00000163995.22"/>
</dbReference>
<dbReference type="Ensembl" id="ENST00000514025.5">
    <molecule id="Q6H8Q1-4"/>
    <property type="protein sequence ID" value="ENSP00000423661.1"/>
    <property type="gene ID" value="ENSG00000163995.22"/>
</dbReference>
<dbReference type="GeneID" id="84448"/>
<dbReference type="KEGG" id="hsa:84448"/>
<dbReference type="MANE-Select" id="ENST00000447017.7">
    <molecule id="Q6H8Q1-9"/>
    <property type="protein sequence ID" value="ENSP00000393511.2"/>
    <property type="RefSeq nucleotide sequence ID" value="NM_001130083.2"/>
    <property type="RefSeq protein sequence ID" value="NP_001123555.1"/>
</dbReference>
<dbReference type="UCSC" id="uc003gkj.5">
    <molecule id="Q6H8Q1-1"/>
    <property type="organism name" value="human"/>
</dbReference>
<dbReference type="AGR" id="HGNC:19195"/>
<dbReference type="CTD" id="84448"/>
<dbReference type="DisGeNET" id="84448"/>
<dbReference type="GeneCards" id="ABLIM2"/>
<dbReference type="HGNC" id="HGNC:19195">
    <property type="gene designation" value="ABLIM2"/>
</dbReference>
<dbReference type="HPA" id="ENSG00000163995">
    <property type="expression patterns" value="Group enriched (skeletal muscle, tongue)"/>
</dbReference>
<dbReference type="MIM" id="612544">
    <property type="type" value="gene"/>
</dbReference>
<dbReference type="neXtProt" id="NX_Q6H8Q1"/>
<dbReference type="OpenTargets" id="ENSG00000163995"/>
<dbReference type="PharmGKB" id="PA134940437"/>
<dbReference type="VEuPathDB" id="HostDB:ENSG00000163995"/>
<dbReference type="eggNOG" id="KOG1044">
    <property type="taxonomic scope" value="Eukaryota"/>
</dbReference>
<dbReference type="GeneTree" id="ENSGT00950000182850"/>
<dbReference type="HOGENOM" id="CLU_001357_12_3_1"/>
<dbReference type="InParanoid" id="Q6H8Q1"/>
<dbReference type="OMA" id="NTNCAYL"/>
<dbReference type="OrthoDB" id="1746725at2759"/>
<dbReference type="PAN-GO" id="Q6H8Q1">
    <property type="GO annotations" value="3 GO annotations based on evolutionary models"/>
</dbReference>
<dbReference type="PhylomeDB" id="Q6H8Q1"/>
<dbReference type="TreeFam" id="TF318042"/>
<dbReference type="PathwayCommons" id="Q6H8Q1"/>
<dbReference type="Reactome" id="R-HSA-418885">
    <property type="pathway name" value="DCC mediated attractive signaling"/>
</dbReference>
<dbReference type="SignaLink" id="Q6H8Q1"/>
<dbReference type="BioGRID-ORCS" id="84448">
    <property type="hits" value="10 hits in 1151 CRISPR screens"/>
</dbReference>
<dbReference type="CD-CODE" id="FB4E32DD">
    <property type="entry name" value="Presynaptic clusters and postsynaptic densities"/>
</dbReference>
<dbReference type="ChiTaRS" id="ABLIM2">
    <property type="organism name" value="human"/>
</dbReference>
<dbReference type="EvolutionaryTrace" id="Q6H8Q1"/>
<dbReference type="GenomeRNAi" id="84448"/>
<dbReference type="Pharos" id="Q6H8Q1">
    <property type="development level" value="Tdark"/>
</dbReference>
<dbReference type="PRO" id="PR:Q6H8Q1"/>
<dbReference type="Proteomes" id="UP000005640">
    <property type="component" value="Chromosome 4"/>
</dbReference>
<dbReference type="RNAct" id="Q6H8Q1">
    <property type="molecule type" value="protein"/>
</dbReference>
<dbReference type="Bgee" id="ENSG00000163995">
    <property type="expression patterns" value="Expressed in tibialis anterior and 160 other cell types or tissues"/>
</dbReference>
<dbReference type="ExpressionAtlas" id="Q6H8Q1">
    <property type="expression patterns" value="baseline and differential"/>
</dbReference>
<dbReference type="GO" id="GO:0015629">
    <property type="term" value="C:actin cytoskeleton"/>
    <property type="evidence" value="ECO:0000314"/>
    <property type="project" value="MGI"/>
</dbReference>
<dbReference type="GO" id="GO:0005737">
    <property type="term" value="C:cytoplasm"/>
    <property type="evidence" value="ECO:0007669"/>
    <property type="project" value="UniProtKB-SubCell"/>
</dbReference>
<dbReference type="GO" id="GO:0051015">
    <property type="term" value="F:actin filament binding"/>
    <property type="evidence" value="ECO:0000318"/>
    <property type="project" value="GO_Central"/>
</dbReference>
<dbReference type="GO" id="GO:0046872">
    <property type="term" value="F:metal ion binding"/>
    <property type="evidence" value="ECO:0007669"/>
    <property type="project" value="UniProtKB-KW"/>
</dbReference>
<dbReference type="GO" id="GO:0007010">
    <property type="term" value="P:cytoskeleton organization"/>
    <property type="evidence" value="ECO:0007669"/>
    <property type="project" value="InterPro"/>
</dbReference>
<dbReference type="GO" id="GO:0030032">
    <property type="term" value="P:lamellipodium assembly"/>
    <property type="evidence" value="ECO:0000318"/>
    <property type="project" value="GO_Central"/>
</dbReference>
<dbReference type="CDD" id="cd09327">
    <property type="entry name" value="LIM1_abLIM"/>
    <property type="match status" value="1"/>
</dbReference>
<dbReference type="CDD" id="cd09328">
    <property type="entry name" value="LIM2_abLIM"/>
    <property type="match status" value="1"/>
</dbReference>
<dbReference type="CDD" id="cd09329">
    <property type="entry name" value="LIM3_abLIM"/>
    <property type="match status" value="1"/>
</dbReference>
<dbReference type="CDD" id="cd09330">
    <property type="entry name" value="LIM4_abLIM"/>
    <property type="match status" value="1"/>
</dbReference>
<dbReference type="FunFam" id="2.10.110.10:FF:000003">
    <property type="entry name" value="actin-binding LIM protein 1 isoform X1"/>
    <property type="match status" value="1"/>
</dbReference>
<dbReference type="FunFam" id="2.10.110.10:FF:000004">
    <property type="entry name" value="actin-binding LIM protein 1 isoform X1"/>
    <property type="match status" value="1"/>
</dbReference>
<dbReference type="FunFam" id="2.10.110.10:FF:000007">
    <property type="entry name" value="actin-binding LIM protein 1 isoform X1"/>
    <property type="match status" value="1"/>
</dbReference>
<dbReference type="FunFam" id="1.10.950.10:FF:000001">
    <property type="entry name" value="actin-binding LIM protein 1 isoform X2"/>
    <property type="match status" value="1"/>
</dbReference>
<dbReference type="FunFam" id="2.10.110.10:FF:000053">
    <property type="entry name" value="Actin-binding LIM protein family, member 2"/>
    <property type="match status" value="1"/>
</dbReference>
<dbReference type="Gene3D" id="2.10.110.10">
    <property type="entry name" value="Cysteine Rich Protein"/>
    <property type="match status" value="4"/>
</dbReference>
<dbReference type="Gene3D" id="1.10.950.10">
    <property type="entry name" value="Villin headpiece domain"/>
    <property type="match status" value="1"/>
</dbReference>
<dbReference type="InterPro" id="IPR032402">
    <property type="entry name" value="AbLIM_anchor"/>
</dbReference>
<dbReference type="InterPro" id="IPR051618">
    <property type="entry name" value="Actin-binding_LIM"/>
</dbReference>
<dbReference type="InterPro" id="IPR003128">
    <property type="entry name" value="Villin_headpiece"/>
</dbReference>
<dbReference type="InterPro" id="IPR036886">
    <property type="entry name" value="Villin_headpiece_dom_sf"/>
</dbReference>
<dbReference type="InterPro" id="IPR001781">
    <property type="entry name" value="Znf_LIM"/>
</dbReference>
<dbReference type="PANTHER" id="PTHR24213">
    <property type="entry name" value="ACTIN-BINDING LIM PROTEIN"/>
    <property type="match status" value="1"/>
</dbReference>
<dbReference type="PANTHER" id="PTHR24213:SF6">
    <property type="entry name" value="ACTIN-BINDING LIM PROTEIN 2"/>
    <property type="match status" value="1"/>
</dbReference>
<dbReference type="Pfam" id="PF16182">
    <property type="entry name" value="AbLIM_anchor"/>
    <property type="match status" value="2"/>
</dbReference>
<dbReference type="Pfam" id="PF00412">
    <property type="entry name" value="LIM"/>
    <property type="match status" value="4"/>
</dbReference>
<dbReference type="Pfam" id="PF02209">
    <property type="entry name" value="VHP"/>
    <property type="match status" value="1"/>
</dbReference>
<dbReference type="SMART" id="SM00132">
    <property type="entry name" value="LIM"/>
    <property type="match status" value="4"/>
</dbReference>
<dbReference type="SMART" id="SM00153">
    <property type="entry name" value="VHP"/>
    <property type="match status" value="1"/>
</dbReference>
<dbReference type="SUPFAM" id="SSF57716">
    <property type="entry name" value="Glucocorticoid receptor-like (DNA-binding domain)"/>
    <property type="match status" value="6"/>
</dbReference>
<dbReference type="SUPFAM" id="SSF47050">
    <property type="entry name" value="VHP, Villin headpiece domain"/>
    <property type="match status" value="1"/>
</dbReference>
<dbReference type="PROSITE" id="PS51089">
    <property type="entry name" value="HP"/>
    <property type="match status" value="1"/>
</dbReference>
<dbReference type="PROSITE" id="PS00478">
    <property type="entry name" value="LIM_DOMAIN_1"/>
    <property type="match status" value="4"/>
</dbReference>
<dbReference type="PROSITE" id="PS50023">
    <property type="entry name" value="LIM_DOMAIN_2"/>
    <property type="match status" value="4"/>
</dbReference>
<sequence length="611" mass="67812">MSAVSQPQAAPSPLEKSPSTAILCNTCGNVCKGEVLRVQDKYFHIKCFVCKACGCDLAEGGFFVRQGEYICTLDYQRLYGTRCFSCDQFIEGEVVSALGKTYHPDCFVCAVCRLPFPPGDRVTFNGKECMCQKCSLPVSVGSSAHLSQGLRSCGGCGTEIKNGQALVALDKHWHLGCFKCKSCGKLLNAEYISKDGLPYCEADYHAKFGIRCDSCEKYITGRVLEAGEKHYHPSCALCVRCGQMFAEGEEMYLQGSSIWHPACRQAARTEDRNKETRTSSESIISVPASSTSGSPSRVIYAKLGGEILDYRDLAALPKSKAIYDIDRPDMISYSPYISHSAGDRQSYGEGDQDDRSYKQCRTSSPSSTGSVSLGRYTPTSRSPQHYSRPGSESGRSTPSLSVLSDSKPPPSTYQQAPRHFHVPDTGVKDNIYRKPPIYRQHAARRSDGEDGSLDQDNRKKSSWLMLKGDADTRTNSPDLDTQSLSHSSGTDRDPLQRMAGDSFHSRFPYSKSDPLPGHGKNGLDQRNANLAPCGADPDASWGMREYKIYPYDSLIVTNRIRVKLPKDVDRTRLERHLSPEEFQEVFGMSIEEFDRLALWKRNDLKKKALLF</sequence>
<evidence type="ECO:0000250" key="1"/>
<evidence type="ECO:0000250" key="2">
    <source>
        <dbReference type="UniProtKB" id="Q6KC51"/>
    </source>
</evidence>
<evidence type="ECO:0000250" key="3">
    <source>
        <dbReference type="UniProtKB" id="Q8BL65"/>
    </source>
</evidence>
<evidence type="ECO:0000255" key="4">
    <source>
        <dbReference type="PROSITE-ProRule" id="PRU00125"/>
    </source>
</evidence>
<evidence type="ECO:0000255" key="5">
    <source>
        <dbReference type="PROSITE-ProRule" id="PRU00595"/>
    </source>
</evidence>
<evidence type="ECO:0000256" key="6">
    <source>
        <dbReference type="SAM" id="MobiDB-lite"/>
    </source>
</evidence>
<evidence type="ECO:0000269" key="7">
    <source>
    </source>
</evidence>
<evidence type="ECO:0000269" key="8">
    <source>
    </source>
</evidence>
<evidence type="ECO:0000303" key="9">
    <source>
    </source>
</evidence>
<evidence type="ECO:0000303" key="10">
    <source>
    </source>
</evidence>
<evidence type="ECO:0000303" key="11">
    <source>
    </source>
</evidence>
<evidence type="ECO:0000303" key="12">
    <source>
    </source>
</evidence>
<evidence type="ECO:0000303" key="13">
    <source>
    </source>
</evidence>
<evidence type="ECO:0000303" key="14">
    <source ref="2"/>
</evidence>
<evidence type="ECO:0000305" key="15"/>
<evidence type="ECO:0007744" key="16">
    <source>
    </source>
</evidence>
<evidence type="ECO:0007829" key="17">
    <source>
        <dbReference type="PDB" id="1V6G"/>
    </source>
</evidence>
<evidence type="ECO:0007829" key="18">
    <source>
        <dbReference type="PDB" id="1WIG"/>
    </source>
</evidence>
<evidence type="ECO:0007829" key="19">
    <source>
        <dbReference type="PDB" id="2L3X"/>
    </source>
</evidence>
<feature type="chain" id="PRO_0000075699" description="Actin-binding LIM protein 2">
    <location>
        <begin position="1"/>
        <end position="611"/>
    </location>
</feature>
<feature type="domain" description="LIM zinc-binding 1" evidence="4">
    <location>
        <begin position="22"/>
        <end position="81"/>
    </location>
</feature>
<feature type="domain" description="LIM zinc-binding 2" evidence="4">
    <location>
        <begin position="81"/>
        <end position="141"/>
    </location>
</feature>
<feature type="domain" description="LIM zinc-binding 3" evidence="4">
    <location>
        <begin position="151"/>
        <end position="210"/>
    </location>
</feature>
<feature type="domain" description="LIM zinc-binding 4" evidence="4">
    <location>
        <begin position="210"/>
        <end position="270"/>
    </location>
</feature>
<feature type="domain" description="HP" evidence="5">
    <location>
        <begin position="543"/>
        <end position="611"/>
    </location>
</feature>
<feature type="region of interest" description="Disordered" evidence="6">
    <location>
        <begin position="269"/>
        <end position="295"/>
    </location>
</feature>
<feature type="region of interest" description="Disordered" evidence="6">
    <location>
        <begin position="336"/>
        <end position="527"/>
    </location>
</feature>
<feature type="compositionally biased region" description="Basic and acidic residues" evidence="6">
    <location>
        <begin position="269"/>
        <end position="278"/>
    </location>
</feature>
<feature type="compositionally biased region" description="Low complexity" evidence="6">
    <location>
        <begin position="279"/>
        <end position="295"/>
    </location>
</feature>
<feature type="compositionally biased region" description="Low complexity" evidence="6">
    <location>
        <begin position="363"/>
        <end position="372"/>
    </location>
</feature>
<feature type="compositionally biased region" description="Polar residues" evidence="6">
    <location>
        <begin position="393"/>
        <end position="404"/>
    </location>
</feature>
<feature type="compositionally biased region" description="Polar residues" evidence="6">
    <location>
        <begin position="473"/>
        <end position="488"/>
    </location>
</feature>
<feature type="binding site">
    <location>
        <position position="83"/>
    </location>
    <ligand>
        <name>Zn(2+)</name>
        <dbReference type="ChEBI" id="CHEBI:29105"/>
        <label>1</label>
    </ligand>
</feature>
<feature type="binding site">
    <location>
        <position position="86"/>
    </location>
    <ligand>
        <name>Zn(2+)</name>
        <dbReference type="ChEBI" id="CHEBI:29105"/>
        <label>1</label>
    </ligand>
</feature>
<feature type="binding site">
    <location>
        <position position="103"/>
    </location>
    <ligand>
        <name>Zn(2+)</name>
        <dbReference type="ChEBI" id="CHEBI:29105"/>
        <label>1</label>
    </ligand>
</feature>
<feature type="binding site">
    <location>
        <position position="106"/>
    </location>
    <ligand>
        <name>Zn(2+)</name>
        <dbReference type="ChEBI" id="CHEBI:29105"/>
        <label>1</label>
    </ligand>
</feature>
<feature type="binding site">
    <location>
        <position position="109"/>
    </location>
    <ligand>
        <name>Zn(2+)</name>
        <dbReference type="ChEBI" id="CHEBI:29105"/>
        <label>2</label>
    </ligand>
</feature>
<feature type="binding site">
    <location>
        <position position="112"/>
    </location>
    <ligand>
        <name>Zn(2+)</name>
        <dbReference type="ChEBI" id="CHEBI:29105"/>
        <label>2</label>
    </ligand>
</feature>
<feature type="binding site">
    <location>
        <position position="131"/>
    </location>
    <ligand>
        <name>Zn(2+)</name>
        <dbReference type="ChEBI" id="CHEBI:29105"/>
        <label>2</label>
    </ligand>
</feature>
<feature type="binding site">
    <location>
        <position position="134"/>
    </location>
    <ligand>
        <name>Zn(2+)</name>
        <dbReference type="ChEBI" id="CHEBI:29105"/>
        <label>2</label>
    </ligand>
</feature>
<feature type="binding site">
    <location>
        <position position="212"/>
    </location>
    <ligand>
        <name>Zn(2+)</name>
        <dbReference type="ChEBI" id="CHEBI:29105"/>
        <label>3</label>
    </ligand>
</feature>
<feature type="binding site">
    <location>
        <position position="215"/>
    </location>
    <ligand>
        <name>Zn(2+)</name>
        <dbReference type="ChEBI" id="CHEBI:29105"/>
        <label>3</label>
    </ligand>
</feature>
<feature type="binding site">
    <location>
        <position position="232"/>
    </location>
    <ligand>
        <name>Zn(2+)</name>
        <dbReference type="ChEBI" id="CHEBI:29105"/>
        <label>3</label>
    </ligand>
</feature>
<feature type="binding site">
    <location>
        <position position="235"/>
    </location>
    <ligand>
        <name>Zn(2+)</name>
        <dbReference type="ChEBI" id="CHEBI:29105"/>
        <label>3</label>
    </ligand>
</feature>
<feature type="binding site">
    <location>
        <position position="238"/>
    </location>
    <ligand>
        <name>Zn(2+)</name>
        <dbReference type="ChEBI" id="CHEBI:29105"/>
        <label>4</label>
    </ligand>
</feature>
<feature type="binding site">
    <location>
        <position position="241"/>
    </location>
    <ligand>
        <name>Zn(2+)</name>
        <dbReference type="ChEBI" id="CHEBI:29105"/>
        <label>4</label>
    </ligand>
</feature>
<feature type="binding site">
    <location>
        <position position="260"/>
    </location>
    <ligand>
        <name>Zn(2+)</name>
        <dbReference type="ChEBI" id="CHEBI:29105"/>
        <label>4</label>
    </ligand>
</feature>
<feature type="binding site">
    <location>
        <position position="263"/>
    </location>
    <ligand>
        <name>Zn(2+)</name>
        <dbReference type="ChEBI" id="CHEBI:29105"/>
        <label>4</label>
    </ligand>
</feature>
<feature type="modified residue" description="Phosphoserine" evidence="2">
    <location>
        <position position="282"/>
    </location>
</feature>
<feature type="modified residue" description="Phosphoserine" evidence="3">
    <location>
        <position position="294"/>
    </location>
</feature>
<feature type="modified residue" description="Phosphoserine" evidence="16">
    <location>
        <position position="364"/>
    </location>
</feature>
<feature type="modified residue" description="Phosphoserine" evidence="3">
    <location>
        <position position="367"/>
    </location>
</feature>
<feature type="modified residue" description="Phosphoserine" evidence="2">
    <location>
        <position position="452"/>
    </location>
</feature>
<feature type="modified residue" description="Phosphothreonine" evidence="3">
    <location>
        <position position="472"/>
    </location>
</feature>
<feature type="modified residue" description="Phosphoserine" evidence="2">
    <location>
        <position position="476"/>
    </location>
</feature>
<feature type="modified residue" description="Phosphoserine" evidence="2">
    <location>
        <position position="578"/>
    </location>
</feature>
<feature type="splice variant" id="VSP_012112" description="In isoform 4." evidence="10">
    <location>
        <begin position="1"/>
        <end position="243"/>
    </location>
</feature>
<feature type="splice variant" id="VSP_012113" description="In isoform 3, isoform 4 and isoform 6." evidence="10 11">
    <original>E</original>
    <variation>ESPQLLSPTPTE</variation>
    <location>
        <position position="349"/>
    </location>
</feature>
<feature type="splice variant" id="VSP_012114" description="In isoform 4." evidence="10">
    <location>
        <begin position="389"/>
        <end position="422"/>
    </location>
</feature>
<feature type="splice variant" id="VSP_046646" description="In isoform 9." evidence="15">
    <original>P</original>
    <variation>PAGTVSVGTSSCLSLSQHPSPTSVFRHHYIPYFR</variation>
    <location>
        <position position="389"/>
    </location>
</feature>
<feature type="splice variant" id="VSP_012115" description="In isoform 3, isoform 6, isoform 7 and isoform 8." evidence="10 11 12">
    <location>
        <begin position="390"/>
        <end position="441"/>
    </location>
</feature>
<feature type="splice variant" id="VSP_012116" description="In isoform 4, isoform 5, isoform 6, isoform 8 and isoform 9." evidence="10 11 13">
    <original>K</original>
    <variation>KQ</variation>
    <location>
        <position position="459"/>
    </location>
</feature>
<feature type="splice variant" id="VSP_012117" description="In isoform 2, isoform 3, isoform 5 and isoform 8." evidence="9 10 11 13 14">
    <original>RFPYSKSDPLPGHGKNGLDQRNANLAPCGADPDASWGMRE</original>
    <variation>Q</variation>
    <location>
        <begin position="506"/>
        <end position="545"/>
    </location>
</feature>
<feature type="splice variant" id="VSP_012118" description="In isoform 6." evidence="11">
    <original>FPYS</original>
    <variation>EWFF</variation>
    <location>
        <begin position="507"/>
        <end position="510"/>
    </location>
</feature>
<feature type="splice variant" id="VSP_012119" description="In isoform 6." evidence="11">
    <location>
        <begin position="511"/>
        <end position="611"/>
    </location>
</feature>
<feature type="sequence variant" id="VAR_062665" description="In a pancreatic ductal adenocarcinoma sample; somatic mutation; dbSNP:rs757430763." evidence="8">
    <original>G</original>
    <variation>R</variation>
    <location>
        <position position="227"/>
    </location>
</feature>
<feature type="sequence variant" id="VAR_062666" description="In a pancreatic ductal adenocarcinoma sample; somatic mutation." evidence="8">
    <original>K</original>
    <variation>M</variation>
    <location>
        <position position="274"/>
    </location>
</feature>
<feature type="sequence conflict" description="In Ref. 3; BAC04414." evidence="15" ref="3">
    <original>R</original>
    <variation>G</variation>
    <location>
        <position position="240"/>
    </location>
</feature>
<feature type="sequence conflict" description="In Ref. 3; BAC04414." evidence="15" ref="3">
    <original>D</original>
    <variation>G</variation>
    <location>
        <position position="312"/>
    </location>
</feature>
<feature type="helix" evidence="17">
    <location>
        <begin position="75"/>
        <end position="77"/>
    </location>
</feature>
<feature type="turn" evidence="17">
    <location>
        <begin position="84"/>
        <end position="86"/>
    </location>
</feature>
<feature type="strand" evidence="17">
    <location>
        <begin position="95"/>
        <end position="97"/>
    </location>
</feature>
<feature type="strand" evidence="17">
    <location>
        <begin position="100"/>
        <end position="102"/>
    </location>
</feature>
<feature type="turn" evidence="17">
    <location>
        <begin position="104"/>
        <end position="106"/>
    </location>
</feature>
<feature type="strand" evidence="17">
    <location>
        <begin position="110"/>
        <end position="112"/>
    </location>
</feature>
<feature type="strand" evidence="17">
    <location>
        <begin position="118"/>
        <end position="120"/>
    </location>
</feature>
<feature type="strand" evidence="17">
    <location>
        <begin position="122"/>
        <end position="125"/>
    </location>
</feature>
<feature type="strand" evidence="17">
    <location>
        <begin position="128"/>
        <end position="131"/>
    </location>
</feature>
<feature type="helix" evidence="17">
    <location>
        <begin position="132"/>
        <end position="135"/>
    </location>
</feature>
<feature type="strand" evidence="18">
    <location>
        <begin position="213"/>
        <end position="215"/>
    </location>
</feature>
<feature type="turn" evidence="18">
    <location>
        <begin position="233"/>
        <end position="235"/>
    </location>
</feature>
<feature type="strand" evidence="18">
    <location>
        <begin position="239"/>
        <end position="241"/>
    </location>
</feature>
<feature type="strand" evidence="18">
    <location>
        <begin position="252"/>
        <end position="254"/>
    </location>
</feature>
<feature type="strand" evidence="18">
    <location>
        <begin position="257"/>
        <end position="259"/>
    </location>
</feature>
<feature type="helix" evidence="18">
    <location>
        <begin position="263"/>
        <end position="266"/>
    </location>
</feature>
<feature type="strand" evidence="18">
    <location>
        <begin position="268"/>
        <end position="271"/>
    </location>
</feature>
<feature type="helix" evidence="19">
    <location>
        <begin position="551"/>
        <end position="554"/>
    </location>
</feature>
<feature type="helix" evidence="19">
    <location>
        <begin position="556"/>
        <end position="558"/>
    </location>
</feature>
<feature type="turn" evidence="19">
    <location>
        <begin position="559"/>
        <end position="561"/>
    </location>
</feature>
<feature type="strand" evidence="19">
    <location>
        <begin position="570"/>
        <end position="572"/>
    </location>
</feature>
<feature type="helix" evidence="19">
    <location>
        <begin position="573"/>
        <end position="576"/>
    </location>
</feature>
<feature type="helix" evidence="19">
    <location>
        <begin position="579"/>
        <end position="586"/>
    </location>
</feature>
<feature type="helix" evidence="19">
    <location>
        <begin position="590"/>
        <end position="595"/>
    </location>
</feature>
<feature type="helix" evidence="19">
    <location>
        <begin position="598"/>
        <end position="607"/>
    </location>
</feature>
<accession>Q6H8Q1</accession>
<accession>E9PF39</accession>
<accession>Q08E71</accession>
<accession>Q19VH0</accession>
<accession>Q6H8Q0</accession>
<accession>Q6NX73</accession>
<accession>Q8N3C5</accession>
<accession>Q8N9E9</accession>
<accession>Q8N9G2</accession>
<accession>Q96JL7</accession>
<keyword id="KW-0002">3D-structure</keyword>
<keyword id="KW-0025">Alternative splicing</keyword>
<keyword id="KW-0963">Cytoplasm</keyword>
<keyword id="KW-0440">LIM domain</keyword>
<keyword id="KW-0479">Metal-binding</keyword>
<keyword id="KW-0597">Phosphoprotein</keyword>
<keyword id="KW-1267">Proteomics identification</keyword>
<keyword id="KW-1185">Reference proteome</keyword>
<keyword id="KW-0677">Repeat</keyword>
<keyword id="KW-0862">Zinc</keyword>
<organism>
    <name type="scientific">Homo sapiens</name>
    <name type="common">Human</name>
    <dbReference type="NCBI Taxonomy" id="9606"/>
    <lineage>
        <taxon>Eukaryota</taxon>
        <taxon>Metazoa</taxon>
        <taxon>Chordata</taxon>
        <taxon>Craniata</taxon>
        <taxon>Vertebrata</taxon>
        <taxon>Euteleostomi</taxon>
        <taxon>Mammalia</taxon>
        <taxon>Eutheria</taxon>
        <taxon>Euarchontoglires</taxon>
        <taxon>Primates</taxon>
        <taxon>Haplorrhini</taxon>
        <taxon>Catarrhini</taxon>
        <taxon>Hominidae</taxon>
        <taxon>Homo</taxon>
    </lineage>
</organism>
<proteinExistence type="evidence at protein level"/>
<gene>
    <name type="primary">ABLIM2</name>
    <name type="synonym">KIAA1808</name>
</gene>
<reference key="1">
    <citation type="journal article" date="2007" name="J. Biol. Chem.">
        <title>Two novel members of the ABLIM protein family, ABLIM-2 and -3, associate with STARS and directly bind F-actin.</title>
        <authorList>
            <person name="Barrientos T."/>
            <person name="Frank D."/>
            <person name="Kuwahara K."/>
            <person name="Bezprozvannaya S."/>
            <person name="Pipes G.C.T."/>
            <person name="Bassel-Duby R."/>
            <person name="Richardson J.A."/>
            <person name="Katus H.A."/>
            <person name="Olson E.N."/>
            <person name="Frey N."/>
        </authorList>
    </citation>
    <scope>NUCLEOTIDE SEQUENCE [MRNA] (ISOFORM 7)</scope>
    <scope>FUNCTION</scope>
    <scope>TISSUE SPECIFICITY</scope>
    <scope>INTERACTION WITH ABRA AND F-ACTIN</scope>
    <source>
        <tissue>Heart</tissue>
    </source>
</reference>
<reference key="2">
    <citation type="submission" date="2004-06" db="EMBL/GenBank/DDBJ databases">
        <title>Structure and transcriptional activity of the ABLIM2 gene of human, mouse and rat.</title>
        <authorList>
            <person name="Klimov E.A."/>
            <person name="Rakhmanaliev E.R."/>
            <person name="Rudco O.I."/>
        </authorList>
    </citation>
    <scope>NUCLEOTIDE SEQUENCE [MRNA] (ISOFORMS 1 AND 2)</scope>
</reference>
<reference key="3">
    <citation type="journal article" date="2004" name="Nat. Genet.">
        <title>Complete sequencing and characterization of 21,243 full-length human cDNAs.</title>
        <authorList>
            <person name="Ota T."/>
            <person name="Suzuki Y."/>
            <person name="Nishikawa T."/>
            <person name="Otsuki T."/>
            <person name="Sugiyama T."/>
            <person name="Irie R."/>
            <person name="Wakamatsu A."/>
            <person name="Hayashi K."/>
            <person name="Sato H."/>
            <person name="Nagai K."/>
            <person name="Kimura K."/>
            <person name="Makita H."/>
            <person name="Sekine M."/>
            <person name="Obayashi M."/>
            <person name="Nishi T."/>
            <person name="Shibahara T."/>
            <person name="Tanaka T."/>
            <person name="Ishii S."/>
            <person name="Yamamoto J."/>
            <person name="Saito K."/>
            <person name="Kawai Y."/>
            <person name="Isono Y."/>
            <person name="Nakamura Y."/>
            <person name="Nagahari K."/>
            <person name="Murakami K."/>
            <person name="Yasuda T."/>
            <person name="Iwayanagi T."/>
            <person name="Wagatsuma M."/>
            <person name="Shiratori A."/>
            <person name="Sudo H."/>
            <person name="Hosoiri T."/>
            <person name="Kaku Y."/>
            <person name="Kodaira H."/>
            <person name="Kondo H."/>
            <person name="Sugawara M."/>
            <person name="Takahashi M."/>
            <person name="Kanda K."/>
            <person name="Yokoi T."/>
            <person name="Furuya T."/>
            <person name="Kikkawa E."/>
            <person name="Omura Y."/>
            <person name="Abe K."/>
            <person name="Kamihara K."/>
            <person name="Katsuta N."/>
            <person name="Sato K."/>
            <person name="Tanikawa M."/>
            <person name="Yamazaki M."/>
            <person name="Ninomiya K."/>
            <person name="Ishibashi T."/>
            <person name="Yamashita H."/>
            <person name="Murakawa K."/>
            <person name="Fujimori K."/>
            <person name="Tanai H."/>
            <person name="Kimata M."/>
            <person name="Watanabe M."/>
            <person name="Hiraoka S."/>
            <person name="Chiba Y."/>
            <person name="Ishida S."/>
            <person name="Ono Y."/>
            <person name="Takiguchi S."/>
            <person name="Watanabe S."/>
            <person name="Yosida M."/>
            <person name="Hotuta T."/>
            <person name="Kusano J."/>
            <person name="Kanehori K."/>
            <person name="Takahashi-Fujii A."/>
            <person name="Hara H."/>
            <person name="Tanase T.-O."/>
            <person name="Nomura Y."/>
            <person name="Togiya S."/>
            <person name="Komai F."/>
            <person name="Hara R."/>
            <person name="Takeuchi K."/>
            <person name="Arita M."/>
            <person name="Imose N."/>
            <person name="Musashino K."/>
            <person name="Yuuki H."/>
            <person name="Oshima A."/>
            <person name="Sasaki N."/>
            <person name="Aotsuka S."/>
            <person name="Yoshikawa Y."/>
            <person name="Matsunawa H."/>
            <person name="Ichihara T."/>
            <person name="Shiohata N."/>
            <person name="Sano S."/>
            <person name="Moriya S."/>
            <person name="Momiyama H."/>
            <person name="Satoh N."/>
            <person name="Takami S."/>
            <person name="Terashima Y."/>
            <person name="Suzuki O."/>
            <person name="Nakagawa S."/>
            <person name="Senoh A."/>
            <person name="Mizoguchi H."/>
            <person name="Goto Y."/>
            <person name="Shimizu F."/>
            <person name="Wakebe H."/>
            <person name="Hishigaki H."/>
            <person name="Watanabe T."/>
            <person name="Sugiyama A."/>
            <person name="Takemoto M."/>
            <person name="Kawakami B."/>
            <person name="Yamazaki M."/>
            <person name="Watanabe K."/>
            <person name="Kumagai A."/>
            <person name="Itakura S."/>
            <person name="Fukuzumi Y."/>
            <person name="Fujimori Y."/>
            <person name="Komiyama M."/>
            <person name="Tashiro H."/>
            <person name="Tanigami A."/>
            <person name="Fujiwara T."/>
            <person name="Ono T."/>
            <person name="Yamada K."/>
            <person name="Fujii Y."/>
            <person name="Ozaki K."/>
            <person name="Hirao M."/>
            <person name="Ohmori Y."/>
            <person name="Kawabata A."/>
            <person name="Hikiji T."/>
            <person name="Kobatake N."/>
            <person name="Inagaki H."/>
            <person name="Ikema Y."/>
            <person name="Okamoto S."/>
            <person name="Okitani R."/>
            <person name="Kawakami T."/>
            <person name="Noguchi S."/>
            <person name="Itoh T."/>
            <person name="Shigeta K."/>
            <person name="Senba T."/>
            <person name="Matsumura K."/>
            <person name="Nakajima Y."/>
            <person name="Mizuno T."/>
            <person name="Morinaga M."/>
            <person name="Sasaki M."/>
            <person name="Togashi T."/>
            <person name="Oyama M."/>
            <person name="Hata H."/>
            <person name="Watanabe M."/>
            <person name="Komatsu T."/>
            <person name="Mizushima-Sugano J."/>
            <person name="Satoh T."/>
            <person name="Shirai Y."/>
            <person name="Takahashi Y."/>
            <person name="Nakagawa K."/>
            <person name="Okumura K."/>
            <person name="Nagase T."/>
            <person name="Nomura N."/>
            <person name="Kikuchi H."/>
            <person name="Masuho Y."/>
            <person name="Yamashita R."/>
            <person name="Nakai K."/>
            <person name="Yada T."/>
            <person name="Nakamura Y."/>
            <person name="Ohara O."/>
            <person name="Isogai T."/>
            <person name="Sugano S."/>
        </authorList>
    </citation>
    <scope>NUCLEOTIDE SEQUENCE [LARGE SCALE MRNA] (ISOFORMS 3 AND 4)</scope>
    <source>
        <tissue>Brain</tissue>
    </source>
</reference>
<reference key="4">
    <citation type="journal article" date="2005" name="Nature">
        <title>Generation and annotation of the DNA sequences of human chromosomes 2 and 4.</title>
        <authorList>
            <person name="Hillier L.W."/>
            <person name="Graves T.A."/>
            <person name="Fulton R.S."/>
            <person name="Fulton L.A."/>
            <person name="Pepin K.H."/>
            <person name="Minx P."/>
            <person name="Wagner-McPherson C."/>
            <person name="Layman D."/>
            <person name="Wylie K."/>
            <person name="Sekhon M."/>
            <person name="Becker M.C."/>
            <person name="Fewell G.A."/>
            <person name="Delehaunty K.D."/>
            <person name="Miner T.L."/>
            <person name="Nash W.E."/>
            <person name="Kremitzki C."/>
            <person name="Oddy L."/>
            <person name="Du H."/>
            <person name="Sun H."/>
            <person name="Bradshaw-Cordum H."/>
            <person name="Ali J."/>
            <person name="Carter J."/>
            <person name="Cordes M."/>
            <person name="Harris A."/>
            <person name="Isak A."/>
            <person name="van Brunt A."/>
            <person name="Nguyen C."/>
            <person name="Du F."/>
            <person name="Courtney L."/>
            <person name="Kalicki J."/>
            <person name="Ozersky P."/>
            <person name="Abbott S."/>
            <person name="Armstrong J."/>
            <person name="Belter E.A."/>
            <person name="Caruso L."/>
            <person name="Cedroni M."/>
            <person name="Cotton M."/>
            <person name="Davidson T."/>
            <person name="Desai A."/>
            <person name="Elliott G."/>
            <person name="Erb T."/>
            <person name="Fronick C."/>
            <person name="Gaige T."/>
            <person name="Haakenson W."/>
            <person name="Haglund K."/>
            <person name="Holmes A."/>
            <person name="Harkins R."/>
            <person name="Kim K."/>
            <person name="Kruchowski S.S."/>
            <person name="Strong C.M."/>
            <person name="Grewal N."/>
            <person name="Goyea E."/>
            <person name="Hou S."/>
            <person name="Levy A."/>
            <person name="Martinka S."/>
            <person name="Mead K."/>
            <person name="McLellan M.D."/>
            <person name="Meyer R."/>
            <person name="Randall-Maher J."/>
            <person name="Tomlinson C."/>
            <person name="Dauphin-Kohlberg S."/>
            <person name="Kozlowicz-Reilly A."/>
            <person name="Shah N."/>
            <person name="Swearengen-Shahid S."/>
            <person name="Snider J."/>
            <person name="Strong J.T."/>
            <person name="Thompson J."/>
            <person name="Yoakum M."/>
            <person name="Leonard S."/>
            <person name="Pearman C."/>
            <person name="Trani L."/>
            <person name="Radionenko M."/>
            <person name="Waligorski J.E."/>
            <person name="Wang C."/>
            <person name="Rock S.M."/>
            <person name="Tin-Wollam A.-M."/>
            <person name="Maupin R."/>
            <person name="Latreille P."/>
            <person name="Wendl M.C."/>
            <person name="Yang S.-P."/>
            <person name="Pohl C."/>
            <person name="Wallis J.W."/>
            <person name="Spieth J."/>
            <person name="Bieri T.A."/>
            <person name="Berkowicz N."/>
            <person name="Nelson J.O."/>
            <person name="Osborne J."/>
            <person name="Ding L."/>
            <person name="Meyer R."/>
            <person name="Sabo A."/>
            <person name="Shotland Y."/>
            <person name="Sinha P."/>
            <person name="Wohldmann P.E."/>
            <person name="Cook L.L."/>
            <person name="Hickenbotham M.T."/>
            <person name="Eldred J."/>
            <person name="Williams D."/>
            <person name="Jones T.A."/>
            <person name="She X."/>
            <person name="Ciccarelli F.D."/>
            <person name="Izaurralde E."/>
            <person name="Taylor J."/>
            <person name="Schmutz J."/>
            <person name="Myers R.M."/>
            <person name="Cox D.R."/>
            <person name="Huang X."/>
            <person name="McPherson J.D."/>
            <person name="Mardis E.R."/>
            <person name="Clifton S.W."/>
            <person name="Warren W.C."/>
            <person name="Chinwalla A.T."/>
            <person name="Eddy S.R."/>
            <person name="Marra M.A."/>
            <person name="Ovcharenko I."/>
            <person name="Furey T.S."/>
            <person name="Miller W."/>
            <person name="Eichler E.E."/>
            <person name="Bork P."/>
            <person name="Suyama M."/>
            <person name="Torrents D."/>
            <person name="Waterston R.H."/>
            <person name="Wilson R.K."/>
        </authorList>
    </citation>
    <scope>NUCLEOTIDE SEQUENCE [LARGE SCALE GENOMIC DNA]</scope>
</reference>
<reference key="5">
    <citation type="journal article" date="2004" name="Genome Res.">
        <title>The status, quality, and expansion of the NIH full-length cDNA project: the Mammalian Gene Collection (MGC).</title>
        <authorList>
            <consortium name="The MGC Project Team"/>
        </authorList>
    </citation>
    <scope>NUCLEOTIDE SEQUENCE [LARGE SCALE MRNA] (ISOFORMS 6 AND 8)</scope>
    <source>
        <tissue>PNS</tissue>
    </source>
</reference>
<reference key="6">
    <citation type="journal article" date="2001" name="DNA Res.">
        <title>Prediction of the coding sequences of unidentified human genes. XX. The complete sequences of 100 new cDNA clones from brain which code for large proteins in vitro.</title>
        <authorList>
            <person name="Nagase T."/>
            <person name="Nakayama M."/>
            <person name="Nakajima D."/>
            <person name="Kikuno R."/>
            <person name="Ohara O."/>
        </authorList>
    </citation>
    <scope>NUCLEOTIDE SEQUENCE [LARGE SCALE MRNA] OF 34-611 (ISOFORM 2)</scope>
    <source>
        <tissue>Brain</tissue>
    </source>
</reference>
<reference key="7">
    <citation type="journal article" date="2007" name="BMC Genomics">
        <title>The full-ORF clone resource of the German cDNA consortium.</title>
        <authorList>
            <person name="Bechtel S."/>
            <person name="Rosenfelder H."/>
            <person name="Duda A."/>
            <person name="Schmidt C.P."/>
            <person name="Ernst U."/>
            <person name="Wellenreuther R."/>
            <person name="Mehrle A."/>
            <person name="Schuster C."/>
            <person name="Bahr A."/>
            <person name="Bloecker H."/>
            <person name="Heubner D."/>
            <person name="Hoerlein A."/>
            <person name="Michel G."/>
            <person name="Wedler H."/>
            <person name="Koehrer K."/>
            <person name="Ottenwaelder B."/>
            <person name="Poustka A."/>
            <person name="Wiemann S."/>
            <person name="Schupp I."/>
        </authorList>
    </citation>
    <scope>NUCLEOTIDE SEQUENCE [LARGE SCALE MRNA] OF 390-572 (ISOFORM 5)</scope>
    <source>
        <tissue>Amygdala</tissue>
    </source>
</reference>
<reference key="8">
    <citation type="journal article" date="2013" name="J. Proteome Res.">
        <title>Toward a comprehensive characterization of a human cancer cell phosphoproteome.</title>
        <authorList>
            <person name="Zhou H."/>
            <person name="Di Palma S."/>
            <person name="Preisinger C."/>
            <person name="Peng M."/>
            <person name="Polat A.N."/>
            <person name="Heck A.J."/>
            <person name="Mohammed S."/>
        </authorList>
    </citation>
    <scope>PHOSPHORYLATION [LARGE SCALE ANALYSIS] AT SER-364</scope>
    <scope>IDENTIFICATION BY MASS SPECTROMETRY [LARGE SCALE ANALYSIS]</scope>
    <source>
        <tissue>Cervix carcinoma</tissue>
    </source>
</reference>
<reference key="9">
    <citation type="journal article" date="2014" name="J. Proteomics">
        <title>An enzyme assisted RP-RPLC approach for in-depth analysis of human liver phosphoproteome.</title>
        <authorList>
            <person name="Bian Y."/>
            <person name="Song C."/>
            <person name="Cheng K."/>
            <person name="Dong M."/>
            <person name="Wang F."/>
            <person name="Huang J."/>
            <person name="Sun D."/>
            <person name="Wang L."/>
            <person name="Ye M."/>
            <person name="Zou H."/>
        </authorList>
    </citation>
    <scope>IDENTIFICATION BY MASS SPECTROMETRY [LARGE SCALE ANALYSIS]</scope>
    <source>
        <tissue>Liver</tissue>
    </source>
</reference>
<reference key="10">
    <citation type="submission" date="2009-02" db="PDB data bank">
        <title>Solution structure of the LIM domain of the human actin binding LIM protein 2.</title>
        <authorList>
            <consortium name="RIKEN structural genomics initiative (RSGI)"/>
        </authorList>
    </citation>
    <scope>STRUCTURE BY NMR OF 73-140 AND 212-271</scope>
    <scope>ZINC-BINDING SITES</scope>
</reference>
<reference key="11">
    <citation type="journal article" date="2008" name="Science">
        <title>Core signaling pathways in human pancreatic cancers revealed by global genomic analyses.</title>
        <authorList>
            <person name="Jones S."/>
            <person name="Zhang X."/>
            <person name="Parsons D.W."/>
            <person name="Lin J.C."/>
            <person name="Leary R.J."/>
            <person name="Angenendt P."/>
            <person name="Mankoo P."/>
            <person name="Carter H."/>
            <person name="Kamiyama H."/>
            <person name="Jimeno A."/>
            <person name="Hong S.M."/>
            <person name="Fu B."/>
            <person name="Lin M.T."/>
            <person name="Calhoun E.S."/>
            <person name="Kamiyama M."/>
            <person name="Walter K."/>
            <person name="Nikolskaya T."/>
            <person name="Nikolsky Y."/>
            <person name="Hartigan J."/>
            <person name="Smith D.R."/>
            <person name="Hidalgo M."/>
            <person name="Leach S.D."/>
            <person name="Klein A.P."/>
            <person name="Jaffee E.M."/>
            <person name="Goggins M."/>
            <person name="Maitra A."/>
            <person name="Iacobuzio-Donahue C."/>
            <person name="Eshleman J.R."/>
            <person name="Kern S.E."/>
            <person name="Hruban R.H."/>
            <person name="Karchin R."/>
            <person name="Papadopoulos N."/>
            <person name="Parmigiani G."/>
            <person name="Vogelstein B."/>
            <person name="Velculescu V.E."/>
            <person name="Kinzler K.W."/>
        </authorList>
    </citation>
    <scope>VARIANTS [LARGE SCALE ANALYSIS] ARG-227 AND MET-274</scope>
</reference>